<name>HUTH_PSEAB</name>
<proteinExistence type="inferred from homology"/>
<sequence>MSLHLKPGQLTLADLRQAYLAPVRLSLDPSADAPVAASVACVENIIAEGRTAYGINTGFGLLASTRISPADLEKLQRSIVLSHAAGVGEALDDAMVRLVMLLKVNSLARGFSGIRRKVIDALIALINAEVYPHIPLKGSVGASGDLAPLAHMSLVLIGESRARHRGEWLPAAEALAVAGLEPLTLAAKEGLALLNGTQVSTAYALRGLFEAEDLFAAATVCGGLSVEAMLGSRAPFDARIHAARGQRGQIDVAAAYRDLLTASSEVARSHEKCDKVQDPYSLRCQPQVMGACLTQMRQAAEVLEIEANAVSDNPLVFAAEGDVISGGNFHAEPVAMAADNLALALAEIGSLSERRISLMMDMHMSQLPPFLVANGGVNSGFMIAQVTAAALASDNKALAHPASVDSLPTSANQEDHVSMAPNAGKRLWAMAENVRGILAVEWLGACQGLDFREGLKSSPKLEQARRLLRDKVPYYQEDRFFAPDIEAASQLLASGCLNALLPARLLPSL</sequence>
<protein>
    <recommendedName>
        <fullName evidence="1">Histidine ammonia-lyase</fullName>
        <shortName evidence="1">Histidase</shortName>
        <ecNumber evidence="1">4.3.1.3</ecNumber>
    </recommendedName>
</protein>
<evidence type="ECO:0000255" key="1">
    <source>
        <dbReference type="HAMAP-Rule" id="MF_00229"/>
    </source>
</evidence>
<keyword id="KW-0963">Cytoplasm</keyword>
<keyword id="KW-0369">Histidine metabolism</keyword>
<keyword id="KW-0456">Lyase</keyword>
<feature type="chain" id="PRO_1000021565" description="Histidine ammonia-lyase">
    <location>
        <begin position="1"/>
        <end position="509"/>
    </location>
</feature>
<feature type="modified residue" description="2,3-didehydroalanine (Ser)" evidence="1">
    <location>
        <position position="143"/>
    </location>
</feature>
<feature type="cross-link" description="5-imidazolinone (Ala-Gly)" evidence="1">
    <location>
        <begin position="142"/>
        <end position="144"/>
    </location>
</feature>
<reference key="1">
    <citation type="journal article" date="2006" name="Genome Biol.">
        <title>Genomic analysis reveals that Pseudomonas aeruginosa virulence is combinatorial.</title>
        <authorList>
            <person name="Lee D.G."/>
            <person name="Urbach J.M."/>
            <person name="Wu G."/>
            <person name="Liberati N.T."/>
            <person name="Feinbaum R.L."/>
            <person name="Miyata S."/>
            <person name="Diggins L.T."/>
            <person name="He J."/>
            <person name="Saucier M."/>
            <person name="Deziel E."/>
            <person name="Friedman L."/>
            <person name="Li L."/>
            <person name="Grills G."/>
            <person name="Montgomery K."/>
            <person name="Kucherlapati R."/>
            <person name="Rahme L.G."/>
            <person name="Ausubel F.M."/>
        </authorList>
    </citation>
    <scope>NUCLEOTIDE SEQUENCE [LARGE SCALE GENOMIC DNA]</scope>
    <source>
        <strain>UCBPP-PA14</strain>
    </source>
</reference>
<gene>
    <name evidence="1" type="primary">hutH</name>
    <name type="ordered locus">PA14_67320</name>
</gene>
<comment type="catalytic activity">
    <reaction evidence="1">
        <text>L-histidine = trans-urocanate + NH4(+)</text>
        <dbReference type="Rhea" id="RHEA:21232"/>
        <dbReference type="ChEBI" id="CHEBI:17771"/>
        <dbReference type="ChEBI" id="CHEBI:28938"/>
        <dbReference type="ChEBI" id="CHEBI:57595"/>
        <dbReference type="EC" id="4.3.1.3"/>
    </reaction>
</comment>
<comment type="pathway">
    <text evidence="1">Amino-acid degradation; L-histidine degradation into L-glutamate; N-formimidoyl-L-glutamate from L-histidine: step 1/3.</text>
</comment>
<comment type="subcellular location">
    <subcellularLocation>
        <location evidence="1">Cytoplasm</location>
    </subcellularLocation>
</comment>
<comment type="PTM">
    <text evidence="1">Contains an active site 4-methylidene-imidazol-5-one (MIO), which is formed autocatalytically by cyclization and dehydration of residues Ala-Ser-Gly.</text>
</comment>
<comment type="similarity">
    <text evidence="1">Belongs to the PAL/histidase family.</text>
</comment>
<organism>
    <name type="scientific">Pseudomonas aeruginosa (strain UCBPP-PA14)</name>
    <dbReference type="NCBI Taxonomy" id="208963"/>
    <lineage>
        <taxon>Bacteria</taxon>
        <taxon>Pseudomonadati</taxon>
        <taxon>Pseudomonadota</taxon>
        <taxon>Gammaproteobacteria</taxon>
        <taxon>Pseudomonadales</taxon>
        <taxon>Pseudomonadaceae</taxon>
        <taxon>Pseudomonas</taxon>
    </lineage>
</organism>
<dbReference type="EC" id="4.3.1.3" evidence="1"/>
<dbReference type="EMBL" id="CP000438">
    <property type="protein sequence ID" value="ABJ14481.1"/>
    <property type="molecule type" value="Genomic_DNA"/>
</dbReference>
<dbReference type="RefSeq" id="WP_003095952.1">
    <property type="nucleotide sequence ID" value="NZ_CP034244.1"/>
</dbReference>
<dbReference type="SMR" id="Q02ER8"/>
<dbReference type="KEGG" id="pau:PA14_67320"/>
<dbReference type="PseudoCAP" id="PA14_67320"/>
<dbReference type="HOGENOM" id="CLU_014801_4_0_6"/>
<dbReference type="BioCyc" id="PAER208963:G1G74-5680-MONOMER"/>
<dbReference type="UniPathway" id="UPA00379">
    <property type="reaction ID" value="UER00549"/>
</dbReference>
<dbReference type="Proteomes" id="UP000000653">
    <property type="component" value="Chromosome"/>
</dbReference>
<dbReference type="GO" id="GO:0005737">
    <property type="term" value="C:cytoplasm"/>
    <property type="evidence" value="ECO:0007669"/>
    <property type="project" value="UniProtKB-SubCell"/>
</dbReference>
<dbReference type="GO" id="GO:0004397">
    <property type="term" value="F:histidine ammonia-lyase activity"/>
    <property type="evidence" value="ECO:0007669"/>
    <property type="project" value="UniProtKB-UniRule"/>
</dbReference>
<dbReference type="GO" id="GO:0019556">
    <property type="term" value="P:L-histidine catabolic process to glutamate and formamide"/>
    <property type="evidence" value="ECO:0007669"/>
    <property type="project" value="UniProtKB-UniPathway"/>
</dbReference>
<dbReference type="GO" id="GO:0019557">
    <property type="term" value="P:L-histidine catabolic process to glutamate and formate"/>
    <property type="evidence" value="ECO:0007669"/>
    <property type="project" value="UniProtKB-UniPathway"/>
</dbReference>
<dbReference type="CDD" id="cd00332">
    <property type="entry name" value="PAL-HAL"/>
    <property type="match status" value="1"/>
</dbReference>
<dbReference type="FunFam" id="1.10.275.10:FF:000005">
    <property type="entry name" value="Histidine ammonia-lyase"/>
    <property type="match status" value="1"/>
</dbReference>
<dbReference type="FunFam" id="1.20.200.10:FF:000003">
    <property type="entry name" value="Histidine ammonia-lyase"/>
    <property type="match status" value="1"/>
</dbReference>
<dbReference type="Gene3D" id="1.20.200.10">
    <property type="entry name" value="Fumarase/aspartase (Central domain)"/>
    <property type="match status" value="1"/>
</dbReference>
<dbReference type="Gene3D" id="1.10.275.10">
    <property type="entry name" value="Fumarase/aspartase (N-terminal domain)"/>
    <property type="match status" value="1"/>
</dbReference>
<dbReference type="HAMAP" id="MF_00229">
    <property type="entry name" value="His_ammonia_lyase"/>
    <property type="match status" value="1"/>
</dbReference>
<dbReference type="InterPro" id="IPR001106">
    <property type="entry name" value="Aromatic_Lyase"/>
</dbReference>
<dbReference type="InterPro" id="IPR024083">
    <property type="entry name" value="Fumarase/histidase_N"/>
</dbReference>
<dbReference type="InterPro" id="IPR005921">
    <property type="entry name" value="HutH"/>
</dbReference>
<dbReference type="InterPro" id="IPR008948">
    <property type="entry name" value="L-Aspartase-like"/>
</dbReference>
<dbReference type="InterPro" id="IPR022313">
    <property type="entry name" value="Phe/His_NH3-lyase_AS"/>
</dbReference>
<dbReference type="NCBIfam" id="TIGR01225">
    <property type="entry name" value="hutH"/>
    <property type="match status" value="1"/>
</dbReference>
<dbReference type="NCBIfam" id="NF006871">
    <property type="entry name" value="PRK09367.1"/>
    <property type="match status" value="1"/>
</dbReference>
<dbReference type="PANTHER" id="PTHR10362">
    <property type="entry name" value="HISTIDINE AMMONIA-LYASE"/>
    <property type="match status" value="1"/>
</dbReference>
<dbReference type="Pfam" id="PF00221">
    <property type="entry name" value="Lyase_aromatic"/>
    <property type="match status" value="1"/>
</dbReference>
<dbReference type="SUPFAM" id="SSF48557">
    <property type="entry name" value="L-aspartase-like"/>
    <property type="match status" value="1"/>
</dbReference>
<dbReference type="PROSITE" id="PS00488">
    <property type="entry name" value="PAL_HISTIDASE"/>
    <property type="match status" value="1"/>
</dbReference>
<accession>Q02ER8</accession>